<accession>P18799</accession>
<name>ENV_HV1ND</name>
<organism>
    <name type="scientific">Human immunodeficiency virus type 1 group M subtype D (isolate NDK)</name>
    <name type="common">HIV-1</name>
    <dbReference type="NCBI Taxonomy" id="11695"/>
    <lineage>
        <taxon>Viruses</taxon>
        <taxon>Riboviria</taxon>
        <taxon>Pararnavirae</taxon>
        <taxon>Artverviricota</taxon>
        <taxon>Revtraviricetes</taxon>
        <taxon>Ortervirales</taxon>
        <taxon>Retroviridae</taxon>
        <taxon>Orthoretrovirinae</taxon>
        <taxon>Lentivirus</taxon>
        <taxon>Human immunodeficiency virus type 1</taxon>
    </lineage>
</organism>
<reference key="1">
    <citation type="journal article" date="1989" name="Gene">
        <title>Nucleotide sequence of HIV1-NDK: a highly cytopathic strain of the human immunodeficiency virus.</title>
        <authorList>
            <person name="Spire B."/>
            <person name="Sire J."/>
            <person name="Zachar V."/>
            <person name="Rey F."/>
            <person name="Barre-Sinoussi F."/>
            <person name="Galibert F."/>
            <person name="Hampe A."/>
            <person name="Chermann J.C."/>
        </authorList>
    </citation>
    <scope>NUCLEOTIDE SEQUENCE [GENOMIC DNA]</scope>
</reference>
<reference key="2">
    <citation type="journal article" date="1993" name="Proc. Natl. Acad. Sci. U.S.A.">
        <title>Infection of colonic epithelial cell lines by type 1 human immunodeficiency virus is associated with cell surface expression of galactosylceramide, a potential alternative gp120 receptor.</title>
        <authorList>
            <person name="Fantini J."/>
            <person name="Cook D.G."/>
            <person name="Nathanson N."/>
            <person name="Spitalnik S.L."/>
            <person name="Gonzalez-Scarano F."/>
        </authorList>
    </citation>
    <scope>INTERACTION OF SURFACE PROTEIN GP120 WITH GALACTOSYL CERAMIDE</scope>
</reference>
<reference key="3">
    <citation type="journal article" date="2003" name="APMIS">
        <title>Pathogens target DC-SIGN to influence their fate DC-SIGN functions as a pathogen receptor with broad specificity.</title>
        <authorList>
            <person name="Geijtenbeek T.B."/>
            <person name="van Kooyk Y."/>
        </authorList>
    </citation>
    <scope>REVIEW</scope>
</reference>
<reference key="4">
    <citation type="journal article" date="2003" name="Biochim. Biophys. Acta">
        <title>The HIV Env-mediated fusion reaction.</title>
        <authorList>
            <person name="Gallo S.A."/>
            <person name="Finnegan C.M."/>
            <person name="Viard M."/>
            <person name="Raviv Y."/>
            <person name="Dimitrov A."/>
            <person name="Rawat S.S."/>
            <person name="Puri A."/>
            <person name="Durell S."/>
            <person name="Blumenthal R."/>
        </authorList>
    </citation>
    <scope>REVIEW</scope>
</reference>
<reference key="5">
    <citation type="journal article" date="2005" name="Cell Death Differ.">
        <title>Mechanisms of apoptosis induction by the HIV-1 envelope.</title>
        <authorList>
            <person name="Perfettini J.-L."/>
            <person name="Castedo M."/>
            <person name="Roumier T."/>
            <person name="Andreau K."/>
            <person name="Nardacci R."/>
            <person name="Piacentini M."/>
            <person name="Kroemer G."/>
        </authorList>
    </citation>
    <scope>REVIEW</scope>
</reference>
<reference key="6">
    <citation type="journal article" date="2005" name="AIDS Res. Hum. Retroviruses">
        <title>V3: HIV's switch-hitter.</title>
        <authorList>
            <person name="Hartley O."/>
            <person name="Klasse P.J."/>
            <person name="Sattentau Q.J."/>
            <person name="Moore J.P."/>
        </authorList>
    </citation>
    <scope>REVIEW</scope>
</reference>
<reference key="7">
    <citation type="journal article" date="2005" name="Drugs">
        <title>Emerging drug targets for antiretroviral therapy.</title>
        <authorList>
            <person name="Reeves J.D."/>
            <person name="Piefer A.J."/>
        </authorList>
    </citation>
    <scope>REVIEW</scope>
</reference>
<reference key="8">
    <citation type="journal article" date="2006" name="EMBO J.">
        <title>HIV and the chemokine system: 10 years later.</title>
        <authorList>
            <person name="Lusso P."/>
        </authorList>
    </citation>
    <scope>REVIEW</scope>
</reference>
<protein>
    <recommendedName>
        <fullName evidence="1">Envelope glycoprotein gp160</fullName>
    </recommendedName>
    <alternativeName>
        <fullName evidence="1">Env polyprotein</fullName>
    </alternativeName>
    <component>
        <recommendedName>
            <fullName evidence="1">Surface protein gp120</fullName>
            <shortName evidence="1">SU</shortName>
        </recommendedName>
        <alternativeName>
            <fullName evidence="1">Glycoprotein 120</fullName>
            <shortName evidence="1">gp120</shortName>
        </alternativeName>
    </component>
    <component>
        <recommendedName>
            <fullName evidence="1">Transmembrane protein gp41</fullName>
            <shortName evidence="1">TM</shortName>
        </recommendedName>
        <alternativeName>
            <fullName evidence="1">Glycoprotein 41</fullName>
            <shortName evidence="1">gp41</shortName>
        </alternativeName>
    </component>
</protein>
<feature type="signal peptide" evidence="1">
    <location>
        <begin position="1"/>
        <end position="31"/>
    </location>
</feature>
<feature type="chain" id="PRO_0000239483" description="Envelope glycoprotein gp160" evidence="1">
    <location>
        <begin position="32"/>
        <end position="846"/>
    </location>
</feature>
<feature type="chain" id="PRO_0000038406" description="Surface protein gp120" evidence="1">
    <location>
        <begin position="32"/>
        <end position="501"/>
    </location>
</feature>
<feature type="chain" id="PRO_0000038407" description="Transmembrane protein gp41" evidence="1">
    <location>
        <begin position="502"/>
        <end position="846"/>
    </location>
</feature>
<feature type="topological domain" description="Extracellular" evidence="1">
    <location>
        <begin position="32"/>
        <end position="674"/>
    </location>
</feature>
<feature type="transmembrane region" description="Helical" evidence="1">
    <location>
        <begin position="675"/>
        <end position="695"/>
    </location>
</feature>
<feature type="topological domain" description="Cytoplasmic" evidence="1">
    <location>
        <begin position="696"/>
        <end position="846"/>
    </location>
</feature>
<feature type="region of interest" description="V1" evidence="1">
    <location>
        <begin position="130"/>
        <end position="151"/>
    </location>
</feature>
<feature type="region of interest" description="V2" evidence="1">
    <location>
        <begin position="152"/>
        <end position="191"/>
    </location>
</feature>
<feature type="region of interest" description="V3" evidence="1">
    <location>
        <begin position="291"/>
        <end position="327"/>
    </location>
</feature>
<feature type="region of interest" description="CD4-binding loop" evidence="1">
    <location>
        <begin position="360"/>
        <end position="370"/>
    </location>
</feature>
<feature type="region of interest" description="V4" evidence="1">
    <location>
        <begin position="381"/>
        <end position="408"/>
    </location>
</feature>
<feature type="region of interest" description="V5">
    <location>
        <begin position="450"/>
        <end position="461"/>
    </location>
</feature>
<feature type="region of interest" description="V5" evidence="1">
    <location>
        <begin position="453"/>
        <end position="461"/>
    </location>
</feature>
<feature type="region of interest" description="Fusion peptide" evidence="1">
    <location>
        <begin position="502"/>
        <end position="522"/>
    </location>
</feature>
<feature type="region of interest" description="Immunosuppression" evidence="1">
    <location>
        <begin position="564"/>
        <end position="582"/>
    </location>
</feature>
<feature type="region of interest" description="MPER; binding to GalCer" evidence="1">
    <location>
        <begin position="652"/>
        <end position="673"/>
    </location>
</feature>
<feature type="coiled-coil region" evidence="1">
    <location>
        <begin position="623"/>
        <end position="657"/>
    </location>
</feature>
<feature type="short sequence motif" description="YXXL motif; contains endocytosis signal" evidence="1">
    <location>
        <begin position="702"/>
        <end position="705"/>
    </location>
</feature>
<feature type="short sequence motif" description="Di-leucine internalization motif" evidence="1">
    <location>
        <begin position="845"/>
        <end position="846"/>
    </location>
</feature>
<feature type="site" description="Cleavage; by host furin" evidence="1">
    <location>
        <begin position="501"/>
        <end position="502"/>
    </location>
</feature>
<feature type="lipid moiety-binding region" description="S-palmitoyl cysteine; by host" evidence="1">
    <location>
        <position position="754"/>
    </location>
</feature>
<feature type="lipid moiety-binding region" description="S-palmitoyl cysteine; by host" evidence="1">
    <location>
        <position position="827"/>
    </location>
</feature>
<feature type="glycosylation site" description="N-linked (GlcNAc...) asparagine; by host" evidence="1">
    <location>
        <position position="87"/>
    </location>
</feature>
<feature type="glycosylation site" description="N-linked (GlcNAc...) asparagine; by host" evidence="1">
    <location>
        <position position="129"/>
    </location>
</feature>
<feature type="glycosylation site" description="N-linked (GlcNAc...) asparagine; by host" evidence="1">
    <location>
        <position position="151"/>
    </location>
</feature>
<feature type="glycosylation site" description="N-linked (GlcNAc...) asparagine; by host" evidence="1">
    <location>
        <position position="179"/>
    </location>
</feature>
<feature type="glycosylation site" description="N-linked (GlcNAc...) asparagine; by host" evidence="1">
    <location>
        <position position="182"/>
    </location>
</feature>
<feature type="glycosylation site" description="N-linked (GlcNAc...) asparagine; by host" evidence="1">
    <location>
        <position position="229"/>
    </location>
</feature>
<feature type="glycosylation site" description="N-linked (GlcNAc...) asparagine; by host" evidence="1">
    <location>
        <position position="236"/>
    </location>
</feature>
<feature type="glycosylation site" description="N-linked (GlcNAc...) asparagine; by host" evidence="1">
    <location>
        <position position="257"/>
    </location>
</feature>
<feature type="glycosylation site" description="N-linked (GlcNAc...) asparagine; by host" evidence="1">
    <location>
        <position position="271"/>
    </location>
</feature>
<feature type="glycosylation site" description="N-linked (GlcNAc...) asparagine; by host" evidence="1">
    <location>
        <position position="284"/>
    </location>
</feature>
<feature type="glycosylation site" description="N-linked (GlcNAc...) asparagine; by host" evidence="1">
    <location>
        <position position="290"/>
    </location>
</feature>
<feature type="glycosylation site" description="N-linked (GlcNAc...) asparagine; by host" evidence="1">
    <location>
        <position position="351"/>
    </location>
</feature>
<feature type="glycosylation site" description="N-linked (GlcNAc...) asparagine; by host" evidence="1">
    <location>
        <position position="382"/>
    </location>
</feature>
<feature type="glycosylation site" description="N-linked (GlcNAc...) asparagine; by host" evidence="1">
    <location>
        <position position="388"/>
    </location>
</feature>
<feature type="glycosylation site" description="N-linked (GlcNAc...) asparagine; by host" evidence="1">
    <location>
        <position position="392"/>
    </location>
</feature>
<feature type="glycosylation site" description="N-linked (GlcNAc...) asparagine; by host" evidence="1">
    <location>
        <position position="395"/>
    </location>
</feature>
<feature type="glycosylation site" description="N-linked (GlcNAc...) asparagine; by host" evidence="1">
    <location>
        <position position="401"/>
    </location>
</feature>
<feature type="glycosylation site" description="N-linked (GlcNAc...) asparagine; by host" evidence="1">
    <location>
        <position position="438"/>
    </location>
</feature>
<feature type="glycosylation site" description="N-linked (GlcNAc...) asparagine; by host" evidence="1">
    <location>
        <position position="451"/>
    </location>
</feature>
<feature type="glycosylation site" description="N-linked (GlcNAc...) asparagine; by host" evidence="1">
    <location>
        <position position="452"/>
    </location>
</feature>
<feature type="glycosylation site" description="N-linked (GlcNAc...) asparagine; by host" evidence="1">
    <location>
        <position position="601"/>
    </location>
</feature>
<feature type="glycosylation site" description="N-linked (GlcNAc...) asparagine; by host" evidence="1">
    <location>
        <position position="606"/>
    </location>
</feature>
<feature type="glycosylation site" description="N-linked (GlcNAc...) asparagine; by host" evidence="1">
    <location>
        <position position="615"/>
    </location>
</feature>
<feature type="glycosylation site" description="N-linked (GlcNAc...) asparagine; by host" evidence="1">
    <location>
        <position position="627"/>
    </location>
</feature>
<feature type="disulfide bond" evidence="1">
    <location>
        <begin position="53"/>
        <end position="73"/>
    </location>
</feature>
<feature type="disulfide bond" evidence="1">
    <location>
        <begin position="118"/>
        <end position="200"/>
    </location>
</feature>
<feature type="disulfide bond" evidence="1">
    <location>
        <begin position="125"/>
        <end position="191"/>
    </location>
</feature>
<feature type="disulfide bond" evidence="1">
    <location>
        <begin position="130"/>
        <end position="152"/>
    </location>
</feature>
<feature type="disulfide bond" evidence="1">
    <location>
        <begin position="213"/>
        <end position="242"/>
    </location>
</feature>
<feature type="disulfide bond" evidence="1">
    <location>
        <begin position="223"/>
        <end position="234"/>
    </location>
</feature>
<feature type="disulfide bond" evidence="1">
    <location>
        <begin position="291"/>
        <end position="328"/>
    </location>
</feature>
<feature type="disulfide bond" evidence="1">
    <location>
        <begin position="374"/>
        <end position="435"/>
    </location>
</feature>
<feature type="disulfide bond" evidence="1">
    <location>
        <begin position="381"/>
        <end position="408"/>
    </location>
</feature>
<feature type="disulfide bond" evidence="1">
    <location>
        <begin position="588"/>
        <end position="594"/>
    </location>
</feature>
<comment type="function">
    <molecule>Envelope glycoprotein gp160</molecule>
    <text evidence="1">Oligomerizes in the host endoplasmic reticulum into predominantly trimers. In a second time, gp160 transits in the host Golgi, where glycosylation is completed. The precursor is then proteolytically cleaved in the trans-Golgi and thereby activated by cellular furin or furin-like proteases to produce gp120 and gp41.</text>
</comment>
<comment type="function">
    <molecule>Surface protein gp120</molecule>
    <text evidence="1">Attaches the virus to the host lymphoid cell by binding to the primary receptor CD4. This interaction induces a structural rearrangement creating a high affinity binding site for a chemokine coreceptor like CXCR4 and/or CCR5. Acts as a ligand for CD209/DC-SIGN and CLEC4M/DC-SIGNR, which are respectively found on dendritic cells (DCs), and on endothelial cells of liver sinusoids and lymph node sinuses. These interactions allow capture of viral particles at mucosal surfaces by these cells and subsequent transmission to permissive cells. HIV subverts the migration properties of dendritic cells to gain access to CD4+ T-cells in lymph nodes. Virus transmission to permissive T-cells occurs either in trans (without DCs infection, through viral capture and transmission), or in cis (following DCs productive infection, through the usual CD4-gp120 interaction), thereby inducing a robust infection. In trans infection, bound virions remain infectious over days and it is proposed that they are not degraded, but protected in non-lysosomal acidic organelles within the DCs close to the cell membrane thus contributing to the viral infectious potential during DCs' migration from the periphery to the lymphoid tissues. On arrival at lymphoid tissues, intact virions recycle back to DCs' cell surface allowing virus transmission to CD4+ T-cells.</text>
</comment>
<comment type="function">
    <molecule>Transmembrane protein gp41</molecule>
    <text evidence="1">Acts as a class I viral fusion protein. Under the current model, the protein has at least 3 conformational states: pre-fusion native state, pre-hairpin intermediate state, and post-fusion hairpin state. During fusion of viral and target intracellular membranes, the coiled coil regions (heptad repeats) assume a trimer-of-hairpins structure, positioning the fusion peptide in close proximity to the C-terminal region of the ectodomain. The formation of this structure appears to drive apposition and subsequent fusion of viral and target cell membranes. Complete fusion occurs in host cell endosomes and is dynamin-dependent, however some lipid transfer might occur at the plasma membrane. The virus undergoes clathrin-dependent internalization long before endosomal fusion, thus minimizing the surface exposure of conserved viral epitopes during fusion and reducing the efficacy of inhibitors targeting these epitopes. Membranes fusion leads to delivery of the nucleocapsid into the cytoplasm.</text>
</comment>
<comment type="subunit">
    <molecule>Surface protein gp120</molecule>
    <text evidence="1">The mature envelope protein (Env) consists of a homotrimer of non-covalently associated gp120-gp41 heterodimers. The resulting complex protrudes from the virus surface as a spike. There seems to be as few as 10 spikes on the average virion. Interacts with host CD4, CCR5 and CXCR4. Gp120 also interacts with the C-type lectins CD209/DC-SIGN and CLEC4M/DC-SIGNR (collectively referred to as DC-SIGN(R)). Gp120 and gp41 interact with GalCer. Gp120 interacts with host ITGA4/ITGB7 complex; on CD4+ T-cells, this interaction results in rapid activation of integrin ITGAL/LFA-1, which facilitates efficient cell-to-cell spreading of HIV-1. Gp120 interacts with cell-associated heparan sulfate; this interaction increases virus infectivity on permissive cells and may be involved in infection of CD4- cells.</text>
</comment>
<comment type="subunit">
    <molecule>Transmembrane protein gp41</molecule>
    <text evidence="1">The mature envelope protein (Env) consists of a homotrimer of non-covalently associated gp120-gp41 heterodimers. The resulting complex protrudes from the virus surface as a spike. There seems to be as few as 10 spikes on the average virion.</text>
</comment>
<comment type="subcellular location">
    <molecule>Surface protein gp120</molecule>
    <subcellularLocation>
        <location evidence="1">Virion membrane</location>
        <topology evidence="1">Peripheral membrane protein</topology>
    </subcellularLocation>
    <subcellularLocation>
        <location evidence="1">Host cell membrane</location>
        <topology evidence="1">Peripheral membrane protein</topology>
    </subcellularLocation>
    <subcellularLocation>
        <location evidence="1">Host endosome membrane</location>
        <topology evidence="1">Single-pass type I membrane protein</topology>
    </subcellularLocation>
    <text evidence="1">The surface protein is not anchored to the viral envelope, but associates with the extravirion surface through its binding to TM. It is probably concentrated at the site of budding and incorporated into the virions possibly by contacts between the cytoplasmic tail of Env and the N-terminus of Gag.</text>
</comment>
<comment type="subcellular location">
    <molecule>Transmembrane protein gp41</molecule>
    <subcellularLocation>
        <location evidence="1">Virion membrane</location>
        <topology evidence="1">Single-pass type I membrane protein</topology>
    </subcellularLocation>
    <subcellularLocation>
        <location evidence="1">Host cell membrane</location>
        <topology evidence="1">Single-pass type I membrane protein</topology>
    </subcellularLocation>
    <subcellularLocation>
        <location evidence="1">Host endosome membrane</location>
        <topology evidence="1">Single-pass type I membrane protein</topology>
    </subcellularLocation>
    <text evidence="1">It is probably concentrated at the site of budding and incorporated into the virions possibly by contacts between the cytoplasmic tail of Env and the N-terminus of Gag.</text>
</comment>
<comment type="domain">
    <text evidence="1">Some of the most genetically diverse regions of the viral genome are present in Env. They are called variable regions 1 through 5 (V1 through V5). Coreceptor usage of gp120 is determined mainly by the primary structure of the third variable region (V3) in the outer domain of gp120. The sequence of V3 determines which coreceptor, CCR5 and/or CXCR4 (corresponding to R5/macrophage, X4/T cell and R5X4/T cell and macrophage tropism), is used to trigger the fusion potential of the Env complex, and hence which cells the virus can infect. Binding to CCR5 involves a region adjacent in addition to V3.</text>
</comment>
<comment type="domain">
    <text evidence="1">The membrane proximal external region (MPER) present in gp41 is a tryptophan-rich region recognized by the antibodies 2F5, Z13, and 4E10. MPER seems to play a role in fusion.</text>
</comment>
<comment type="domain">
    <text evidence="1">The 17 amino acids long immunosuppressive region is present in many retroviral envelope proteins. Synthetic peptides derived from this relatively conserved sequence inhibit immune function in vitro and in vivo.</text>
</comment>
<comment type="domain">
    <text evidence="1">The YXXL motif is involved in determining the exact site of viral release at the surface of infected mononuclear cells and promotes endocytosis. YXXL and di-leucine endocytosis motifs interact directly or indirectly with the clathrin adapter complexes, opperate independently, and their activities are not additive.</text>
</comment>
<comment type="domain">
    <text evidence="1">The CD4-binding region is targeted by the antibody b12.</text>
</comment>
<comment type="PTM">
    <text evidence="1">Highly glycosylated by host. The high number of glycan on the protein is reffered to as 'glycan shield' because it contributes to hide protein sequence from adaptive immune system.</text>
</comment>
<comment type="PTM">
    <text evidence="1">Palmitoylation of the transmembrane protein and of Env polyprotein (prior to its proteolytic cleavage) is essential for their association with host cell membrane lipid rafts. Palmitoylation is therefore required for envelope trafficking to classical lipid rafts, but not for viral replication.</text>
</comment>
<comment type="PTM">
    <text evidence="1">Specific enzymatic cleavages in vivo yield mature proteins. Envelope glycoproteins are synthesized as an inactive precursor that is heavily N-glycosylated and processed likely by host cell furin in the Golgi to yield the mature SU and TM proteins. The cleavage site between SU and TM requires the minimal sequence [KR]-X-[KR]-R. About 2 of the 9 disulfide bonds of gp41 are reduced by P4HB/PDI, following binding to CD4 receptor.</text>
</comment>
<comment type="miscellaneous">
    <text evidence="1">Inhibitors targeting HIV-1 viral envelope proteins are used as antiretroviral drugs. Attachment of virions to the cell surface via non-specific interactions and CD4 binding can be blocked by inhibitors that include cyanovirin-N, cyclotriazadisulfonamide analogs, PRO 2000, TNX 355 and PRO 542. In addition, BMS 806 can block CD4-induced conformational changes. Env interactions with the coreceptor molecules can be targeted by CCR5 antagonists including SCH-D, maraviroc (UK 427857) and aplaviroc (GW 873140), and the CXCR4 antagonist AMD 070. Fusion of viral and cellular membranes can be inhibited by peptides such as enfuvirtide and tifuvirtide (T 1249). Resistance to inhibitors associated with mutations in Env are observed. Most of the time, single mutations confer only a modest reduction in drug susceptibility. Combination of several mutations is usually required to develop a high-level drug resistance.</text>
</comment>
<comment type="miscellaneous">
    <text evidence="1">HIV-1 lineages are divided in three main groups, M (for Major), O (for Outlier), and N (for New, or Non-M, Non-O). The vast majority of strains found worldwide belong to the group M. Group O seems to be endemic to and largely confined to Cameroon and neighboring countries in West Central Africa, where these viruses represent a small minority of HIV-1 strains. The group N is represented by a limited number of isolates from Cameroonian persons. The group M is further subdivided in 9 clades or subtypes (A to D, F to H, J and K).</text>
</comment>
<comment type="similarity">
    <text evidence="1">Belongs to the HIV-1 env protein family.</text>
</comment>
<comment type="online information" name="hivdb">
    <link uri="https://hivdb.stanford.edu"/>
    <text>HIV drug resistance database</text>
</comment>
<comment type="online information" name="HIV drug resistance mutations">
    <link uri="https://www.iasusa.org/hiv-drug-resistance/hiv-drug-resistance-mutations/"/>
</comment>
<sequence length="846" mass="96476">MRAREKERNCQNLWKWGIMLLGMLMTCSAAEDLWVTVYYGVPIWKEATTTLFCASDAKAYKKEAHNIWATHACVPTDPNPQEIELENVTENFNMWKNNMVEQMHEDIISLWDQSLKPCVKLTPLCVTLNCTDELRNSKGNGKVEEEEKRKNCSFNVRDKREQVYALFYKLDIVPIDNNNRTNSTNYRLINCDTSTITQACPKISFEPIPIHFCAPAGFAILKCRDKKFNGTGPCSNVSTVQCTHGIRPVVSTQLLLNGSLAEEEIIIRSENLTNNVKTIIVQLNASIVINCTRPYKYTRQRTSIGLRQSLYTITGKKKKTGYIGQAHCKISRAEWNKALQQVATKLGNLLNKTTITFKPSSGGDPEITSHMLNCGGDFFYCNTSRLFNSTWNQTNSTGFNNGTVTLPCRIKQIVNLWQRVGKAMYAPPIEGLIKCSSNITGLLLTRDGGANNSSHETIRPGGGDMRDNWRSELYKYKVVKIEPIGVAPTKARRRVVEREKRAIGLGAVFLGFLGAAGSTMGAASVTLTVQARQLMSGIVHQQNNLLRAIEAQQHLLQLTVWGIKQLQARVLAVERYLRDQQLLGIWGCSGRHICTTNVPWNSSWSNRSLDEIWQNMTWMEWEREIDNYTGLIYSLIEESQIQQEKNEKELLELDKWASLWNWFSITKWLWYIKLFIMIVGGLIGLRIVFAVLSVVNRVRQGYSPLSFQTLLPVPRGPDRPEEIEEEGGERGRDRSIRLVNGLFALFWDDLRNLCLFSYHRLRDSILIAARIVELLGRRGWEALKYLWNLLQYWSQELRNSASSLLDTIAIAVAERTDRVIEVVQRACRAILNVPRRIRQGLERLLL</sequence>
<keyword id="KW-0014">AIDS</keyword>
<keyword id="KW-0053">Apoptosis</keyword>
<keyword id="KW-1165">Clathrin-mediated endocytosis of virus by host</keyword>
<keyword id="KW-0165">Cleavage on pair of basic residues</keyword>
<keyword id="KW-0175">Coiled coil</keyword>
<keyword id="KW-1015">Disulfide bond</keyword>
<keyword id="KW-1170">Fusion of virus membrane with host endosomal membrane</keyword>
<keyword id="KW-1168">Fusion of virus membrane with host membrane</keyword>
<keyword id="KW-0325">Glycoprotein</keyword>
<keyword id="KW-1032">Host cell membrane</keyword>
<keyword id="KW-1039">Host endosome</keyword>
<keyword id="KW-1043">Host membrane</keyword>
<keyword id="KW-0945">Host-virus interaction</keyword>
<keyword id="KW-0449">Lipoprotein</keyword>
<keyword id="KW-0472">Membrane</keyword>
<keyword id="KW-0564">Palmitate</keyword>
<keyword id="KW-0732">Signal</keyword>
<keyword id="KW-0812">Transmembrane</keyword>
<keyword id="KW-1133">Transmembrane helix</keyword>
<keyword id="KW-1161">Viral attachment to host cell</keyword>
<keyword id="KW-0261">Viral envelope protein</keyword>
<keyword id="KW-0899">Viral immunoevasion</keyword>
<keyword id="KW-1162">Viral penetration into host cytoplasm</keyword>
<keyword id="KW-0946">Virion</keyword>
<keyword id="KW-1164">Virus endocytosis by host</keyword>
<keyword id="KW-1160">Virus entry into host cell</keyword>
<evidence type="ECO:0000255" key="1">
    <source>
        <dbReference type="HAMAP-Rule" id="MF_04083"/>
    </source>
</evidence>
<organismHost>
    <name type="scientific">Homo sapiens</name>
    <name type="common">Human</name>
    <dbReference type="NCBI Taxonomy" id="9606"/>
</organismHost>
<dbReference type="EMBL" id="M27323">
    <property type="protein sequence ID" value="AAA44873.1"/>
    <property type="molecule type" value="Genomic_DNA"/>
</dbReference>
<dbReference type="PIR" id="JQ0066">
    <property type="entry name" value="VCLJND"/>
</dbReference>
<dbReference type="SMR" id="P18799"/>
<dbReference type="GlyCosmos" id="P18799">
    <property type="glycosylation" value="24 sites, No reported glycans"/>
</dbReference>
<dbReference type="Reactome" id="R-HSA-5621480">
    <property type="pathway name" value="Dectin-2 family"/>
</dbReference>
<dbReference type="Proteomes" id="UP000172620">
    <property type="component" value="Segment"/>
</dbReference>
<dbReference type="GO" id="GO:0044175">
    <property type="term" value="C:host cell endosome membrane"/>
    <property type="evidence" value="ECO:0007669"/>
    <property type="project" value="UniProtKB-SubCell"/>
</dbReference>
<dbReference type="GO" id="GO:0020002">
    <property type="term" value="C:host cell plasma membrane"/>
    <property type="evidence" value="ECO:0007669"/>
    <property type="project" value="UniProtKB-SubCell"/>
</dbReference>
<dbReference type="GO" id="GO:0016020">
    <property type="term" value="C:membrane"/>
    <property type="evidence" value="ECO:0007669"/>
    <property type="project" value="UniProtKB-UniRule"/>
</dbReference>
<dbReference type="GO" id="GO:0019031">
    <property type="term" value="C:viral envelope"/>
    <property type="evidence" value="ECO:0007669"/>
    <property type="project" value="UniProtKB-KW"/>
</dbReference>
<dbReference type="GO" id="GO:0055036">
    <property type="term" value="C:virion membrane"/>
    <property type="evidence" value="ECO:0007669"/>
    <property type="project" value="UniProtKB-SubCell"/>
</dbReference>
<dbReference type="GO" id="GO:0005198">
    <property type="term" value="F:structural molecule activity"/>
    <property type="evidence" value="ECO:0007669"/>
    <property type="project" value="UniProtKB-UniRule"/>
</dbReference>
<dbReference type="GO" id="GO:0075512">
    <property type="term" value="P:clathrin-dependent endocytosis of virus by host cell"/>
    <property type="evidence" value="ECO:0007669"/>
    <property type="project" value="UniProtKB-UniRule"/>
</dbReference>
<dbReference type="GO" id="GO:0039654">
    <property type="term" value="P:fusion of virus membrane with host endosome membrane"/>
    <property type="evidence" value="ECO:0007669"/>
    <property type="project" value="UniProtKB-UniRule"/>
</dbReference>
<dbReference type="GO" id="GO:0019064">
    <property type="term" value="P:fusion of virus membrane with host plasma membrane"/>
    <property type="evidence" value="ECO:0007669"/>
    <property type="project" value="UniProtKB-UniRule"/>
</dbReference>
<dbReference type="GO" id="GO:1903908">
    <property type="term" value="P:positive regulation of plasma membrane raft polarization"/>
    <property type="evidence" value="ECO:0007669"/>
    <property type="project" value="UniProtKB-UniRule"/>
</dbReference>
<dbReference type="GO" id="GO:1903911">
    <property type="term" value="P:positive regulation of receptor clustering"/>
    <property type="evidence" value="ECO:0007669"/>
    <property type="project" value="UniProtKB-UniRule"/>
</dbReference>
<dbReference type="GO" id="GO:0019082">
    <property type="term" value="P:viral protein processing"/>
    <property type="evidence" value="ECO:0007669"/>
    <property type="project" value="UniProtKB-UniRule"/>
</dbReference>
<dbReference type="GO" id="GO:0019062">
    <property type="term" value="P:virion attachment to host cell"/>
    <property type="evidence" value="ECO:0007669"/>
    <property type="project" value="UniProtKB-UniRule"/>
</dbReference>
<dbReference type="CDD" id="cd09909">
    <property type="entry name" value="HIV-1-like_HR1-HR2"/>
    <property type="match status" value="1"/>
</dbReference>
<dbReference type="FunFam" id="1.10.287.210:FF:000001">
    <property type="entry name" value="Envelope glycoprotein gp160"/>
    <property type="match status" value="1"/>
</dbReference>
<dbReference type="FunFam" id="1.20.5.490:FF:000001">
    <property type="entry name" value="Envelope glycoprotein gp160"/>
    <property type="match status" value="1"/>
</dbReference>
<dbReference type="FunFam" id="2.170.40.20:FF:000002">
    <property type="entry name" value="Envelope glycoprotein gp160"/>
    <property type="match status" value="1"/>
</dbReference>
<dbReference type="FunFam" id="2.170.40.20:FF:000003">
    <property type="entry name" value="Envelope glycoprotein gp160"/>
    <property type="match status" value="1"/>
</dbReference>
<dbReference type="Gene3D" id="1.10.287.210">
    <property type="match status" value="1"/>
</dbReference>
<dbReference type="Gene3D" id="2.170.40.20">
    <property type="entry name" value="Human immunodeficiency virus 1, Gp160, envelope glycoprotein"/>
    <property type="match status" value="2"/>
</dbReference>
<dbReference type="Gene3D" id="1.20.5.490">
    <property type="entry name" value="Single helix bin"/>
    <property type="match status" value="1"/>
</dbReference>
<dbReference type="HAMAP" id="MF_04083">
    <property type="entry name" value="HIV_ENV"/>
    <property type="match status" value="1"/>
</dbReference>
<dbReference type="InterPro" id="IPR036377">
    <property type="entry name" value="Gp120_core_sf"/>
</dbReference>
<dbReference type="InterPro" id="IPR037527">
    <property type="entry name" value="Gp160"/>
</dbReference>
<dbReference type="InterPro" id="IPR000328">
    <property type="entry name" value="GP41-like"/>
</dbReference>
<dbReference type="InterPro" id="IPR000777">
    <property type="entry name" value="HIV1_Gp120"/>
</dbReference>
<dbReference type="Pfam" id="PF00516">
    <property type="entry name" value="GP120"/>
    <property type="match status" value="2"/>
</dbReference>
<dbReference type="Pfam" id="PF00517">
    <property type="entry name" value="GP41"/>
    <property type="match status" value="1"/>
</dbReference>
<dbReference type="SUPFAM" id="SSF56502">
    <property type="entry name" value="gp120 core"/>
    <property type="match status" value="1"/>
</dbReference>
<dbReference type="SUPFAM" id="SSF58069">
    <property type="entry name" value="Virus ectodomain"/>
    <property type="match status" value="1"/>
</dbReference>
<proteinExistence type="evidence at protein level"/>
<gene>
    <name evidence="1" type="primary">env</name>
</gene>